<organism>
    <name type="scientific">Opitutus terrae (strain DSM 11246 / JCM 15787 / PB90-1)</name>
    <dbReference type="NCBI Taxonomy" id="452637"/>
    <lineage>
        <taxon>Bacteria</taxon>
        <taxon>Pseudomonadati</taxon>
        <taxon>Verrucomicrobiota</taxon>
        <taxon>Opitutia</taxon>
        <taxon>Opitutales</taxon>
        <taxon>Opitutaceae</taxon>
        <taxon>Opitutus</taxon>
    </lineage>
</organism>
<proteinExistence type="inferred from homology"/>
<comment type="function">
    <text evidence="1">Catalyzes the NADPH-dependent reduction of L-glutamate 5-phosphate into L-glutamate 5-semialdehyde and phosphate. The product spontaneously undergoes cyclization to form 1-pyrroline-5-carboxylate.</text>
</comment>
<comment type="catalytic activity">
    <reaction evidence="1">
        <text>L-glutamate 5-semialdehyde + phosphate + NADP(+) = L-glutamyl 5-phosphate + NADPH + H(+)</text>
        <dbReference type="Rhea" id="RHEA:19541"/>
        <dbReference type="ChEBI" id="CHEBI:15378"/>
        <dbReference type="ChEBI" id="CHEBI:43474"/>
        <dbReference type="ChEBI" id="CHEBI:57783"/>
        <dbReference type="ChEBI" id="CHEBI:58066"/>
        <dbReference type="ChEBI" id="CHEBI:58274"/>
        <dbReference type="ChEBI" id="CHEBI:58349"/>
        <dbReference type="EC" id="1.2.1.41"/>
    </reaction>
</comment>
<comment type="pathway">
    <text evidence="1">Amino-acid biosynthesis; L-proline biosynthesis; L-glutamate 5-semialdehyde from L-glutamate: step 2/2.</text>
</comment>
<comment type="subcellular location">
    <subcellularLocation>
        <location evidence="1">Cytoplasm</location>
    </subcellularLocation>
</comment>
<comment type="similarity">
    <text evidence="1">Belongs to the gamma-glutamyl phosphate reductase family.</text>
</comment>
<evidence type="ECO:0000255" key="1">
    <source>
        <dbReference type="HAMAP-Rule" id="MF_00412"/>
    </source>
</evidence>
<accession>B1ZMC1</accession>
<name>PROA_OPITP</name>
<reference key="1">
    <citation type="journal article" date="2011" name="J. Bacteriol.">
        <title>Genome sequence of the verrucomicrobium Opitutus terrae PB90-1, an abundant inhabitant of rice paddy soil ecosystems.</title>
        <authorList>
            <person name="van Passel M.W."/>
            <person name="Kant R."/>
            <person name="Palva A."/>
            <person name="Copeland A."/>
            <person name="Lucas S."/>
            <person name="Lapidus A."/>
            <person name="Glavina del Rio T."/>
            <person name="Pitluck S."/>
            <person name="Goltsman E."/>
            <person name="Clum A."/>
            <person name="Sun H."/>
            <person name="Schmutz J."/>
            <person name="Larimer F.W."/>
            <person name="Land M.L."/>
            <person name="Hauser L."/>
            <person name="Kyrpides N."/>
            <person name="Mikhailova N."/>
            <person name="Richardson P.P."/>
            <person name="Janssen P.H."/>
            <person name="de Vos W.M."/>
            <person name="Smidt H."/>
        </authorList>
    </citation>
    <scope>NUCLEOTIDE SEQUENCE [LARGE SCALE GENOMIC DNA]</scope>
    <source>
        <strain>DSM 11246 / JCM 15787 / PB90-1</strain>
    </source>
</reference>
<gene>
    <name evidence="1" type="primary">proA</name>
    <name type="ordered locus">Oter_0083</name>
</gene>
<protein>
    <recommendedName>
        <fullName evidence="1">Gamma-glutamyl phosphate reductase</fullName>
        <shortName evidence="1">GPR</shortName>
        <ecNumber evidence="1">1.2.1.41</ecNumber>
    </recommendedName>
    <alternativeName>
        <fullName evidence="1">Glutamate-5-semialdehyde dehydrogenase</fullName>
    </alternativeName>
    <alternativeName>
        <fullName evidence="1">Glutamyl-gamma-semialdehyde dehydrogenase</fullName>
        <shortName evidence="1">GSA dehydrogenase</shortName>
    </alternativeName>
</protein>
<sequence>MSADLAQLVTLIAQRARAASLTLATTSTAAKNSALLRLADLIAGSTLPLLNANQLDIAAAKKHGLTQAQIDRLTLTPIRLTQLADSVRHVATLPDPVGEVLEETTRPNGLVLRRVRVPIGVIGIIYEARPNVTIDCAALCLKSGNAAILRGGKESFHTNTALAALIAQALSAAELPADAVQLIPTTERAALTHLLTLDSLVHCIIPRGGESLIRFVAEHSTIPVIKHYKGVCFVYVDREAHLKMAEQIVVNAKTSRPGVCNAAEQLLVHRGVATKFLPAIARALNAAHPVELRCDAESAAILAQENLPHVAASDADFSTEFLDYILAVRVVDSIDTAIATINRDSSNHSDAIVTNDTSAANRFLAGVDSAAVFWNASTRFNDGVEFGLGAEIGISTDRLHARGPMGLRELCSYKWLVSGIGQVRS</sequence>
<dbReference type="EC" id="1.2.1.41" evidence="1"/>
<dbReference type="EMBL" id="CP001032">
    <property type="protein sequence ID" value="ACB73374.1"/>
    <property type="molecule type" value="Genomic_DNA"/>
</dbReference>
<dbReference type="RefSeq" id="WP_012372912.1">
    <property type="nucleotide sequence ID" value="NC_010571.1"/>
</dbReference>
<dbReference type="SMR" id="B1ZMC1"/>
<dbReference type="STRING" id="452637.Oter_0083"/>
<dbReference type="KEGG" id="ote:Oter_0083"/>
<dbReference type="eggNOG" id="COG0014">
    <property type="taxonomic scope" value="Bacteria"/>
</dbReference>
<dbReference type="HOGENOM" id="CLU_030231_0_0_0"/>
<dbReference type="OrthoDB" id="9809970at2"/>
<dbReference type="UniPathway" id="UPA00098">
    <property type="reaction ID" value="UER00360"/>
</dbReference>
<dbReference type="Proteomes" id="UP000007013">
    <property type="component" value="Chromosome"/>
</dbReference>
<dbReference type="GO" id="GO:0005737">
    <property type="term" value="C:cytoplasm"/>
    <property type="evidence" value="ECO:0007669"/>
    <property type="project" value="UniProtKB-SubCell"/>
</dbReference>
<dbReference type="GO" id="GO:0004350">
    <property type="term" value="F:glutamate-5-semialdehyde dehydrogenase activity"/>
    <property type="evidence" value="ECO:0007669"/>
    <property type="project" value="UniProtKB-UniRule"/>
</dbReference>
<dbReference type="GO" id="GO:0050661">
    <property type="term" value="F:NADP binding"/>
    <property type="evidence" value="ECO:0007669"/>
    <property type="project" value="InterPro"/>
</dbReference>
<dbReference type="GO" id="GO:0055129">
    <property type="term" value="P:L-proline biosynthetic process"/>
    <property type="evidence" value="ECO:0007669"/>
    <property type="project" value="UniProtKB-UniRule"/>
</dbReference>
<dbReference type="CDD" id="cd07079">
    <property type="entry name" value="ALDH_F18-19_ProA-GPR"/>
    <property type="match status" value="1"/>
</dbReference>
<dbReference type="FunFam" id="3.40.309.10:FF:000006">
    <property type="entry name" value="Gamma-glutamyl phosphate reductase"/>
    <property type="match status" value="1"/>
</dbReference>
<dbReference type="Gene3D" id="3.40.605.10">
    <property type="entry name" value="Aldehyde Dehydrogenase, Chain A, domain 1"/>
    <property type="match status" value="1"/>
</dbReference>
<dbReference type="Gene3D" id="3.40.309.10">
    <property type="entry name" value="Aldehyde Dehydrogenase, Chain A, domain 2"/>
    <property type="match status" value="1"/>
</dbReference>
<dbReference type="HAMAP" id="MF_00412">
    <property type="entry name" value="ProA"/>
    <property type="match status" value="1"/>
</dbReference>
<dbReference type="InterPro" id="IPR016161">
    <property type="entry name" value="Ald_DH/histidinol_DH"/>
</dbReference>
<dbReference type="InterPro" id="IPR016163">
    <property type="entry name" value="Ald_DH_C"/>
</dbReference>
<dbReference type="InterPro" id="IPR016162">
    <property type="entry name" value="Ald_DH_N"/>
</dbReference>
<dbReference type="InterPro" id="IPR015590">
    <property type="entry name" value="Aldehyde_DH_dom"/>
</dbReference>
<dbReference type="InterPro" id="IPR012134">
    <property type="entry name" value="Glu-5-SA_DH"/>
</dbReference>
<dbReference type="InterPro" id="IPR000965">
    <property type="entry name" value="GPR_dom"/>
</dbReference>
<dbReference type="NCBIfam" id="NF001221">
    <property type="entry name" value="PRK00197.1"/>
    <property type="match status" value="1"/>
</dbReference>
<dbReference type="NCBIfam" id="TIGR00407">
    <property type="entry name" value="proA"/>
    <property type="match status" value="1"/>
</dbReference>
<dbReference type="PANTHER" id="PTHR11063:SF8">
    <property type="entry name" value="DELTA-1-PYRROLINE-5-CARBOXYLATE SYNTHASE"/>
    <property type="match status" value="1"/>
</dbReference>
<dbReference type="PANTHER" id="PTHR11063">
    <property type="entry name" value="GLUTAMATE SEMIALDEHYDE DEHYDROGENASE"/>
    <property type="match status" value="1"/>
</dbReference>
<dbReference type="Pfam" id="PF00171">
    <property type="entry name" value="Aldedh"/>
    <property type="match status" value="1"/>
</dbReference>
<dbReference type="PIRSF" id="PIRSF000151">
    <property type="entry name" value="GPR"/>
    <property type="match status" value="1"/>
</dbReference>
<dbReference type="SUPFAM" id="SSF53720">
    <property type="entry name" value="ALDH-like"/>
    <property type="match status" value="1"/>
</dbReference>
<keyword id="KW-0028">Amino-acid biosynthesis</keyword>
<keyword id="KW-0963">Cytoplasm</keyword>
<keyword id="KW-0521">NADP</keyword>
<keyword id="KW-0560">Oxidoreductase</keyword>
<keyword id="KW-0641">Proline biosynthesis</keyword>
<keyword id="KW-1185">Reference proteome</keyword>
<feature type="chain" id="PRO_1000193633" description="Gamma-glutamyl phosphate reductase">
    <location>
        <begin position="1"/>
        <end position="425"/>
    </location>
</feature>